<reference key="1">
    <citation type="journal article" date="1994" name="Biochim. Biophys. Acta">
        <title>cDNA cloning and sequence of CYP2C29 encoding P-450 MUT-2, a microsomal aldehyde oxygenase.</title>
        <authorList>
            <person name="Matsunaga T."/>
            <person name="Watanabe K."/>
            <person name="Yamamoto I."/>
            <person name="Negishi M."/>
            <person name="Gonzalez F.J."/>
            <person name="Yoshimura H."/>
        </authorList>
    </citation>
    <scope>NUCLEOTIDE SEQUENCE [MRNA]</scope>
    <source>
        <strain>C57BL/6J</strain>
        <tissue>Liver</tissue>
    </source>
</reference>
<reference key="2">
    <citation type="journal article" date="2009" name="PLoS Biol.">
        <title>Lineage-specific biology revealed by a finished genome assembly of the mouse.</title>
        <authorList>
            <person name="Church D.M."/>
            <person name="Goodstadt L."/>
            <person name="Hillier L.W."/>
            <person name="Zody M.C."/>
            <person name="Goldstein S."/>
            <person name="She X."/>
            <person name="Bult C.J."/>
            <person name="Agarwala R."/>
            <person name="Cherry J.L."/>
            <person name="DiCuccio M."/>
            <person name="Hlavina W."/>
            <person name="Kapustin Y."/>
            <person name="Meric P."/>
            <person name="Maglott D."/>
            <person name="Birtle Z."/>
            <person name="Marques A.C."/>
            <person name="Graves T."/>
            <person name="Zhou S."/>
            <person name="Teague B."/>
            <person name="Potamousis K."/>
            <person name="Churas C."/>
            <person name="Place M."/>
            <person name="Herschleb J."/>
            <person name="Runnheim R."/>
            <person name="Forrest D."/>
            <person name="Amos-Landgraf J."/>
            <person name="Schwartz D.C."/>
            <person name="Cheng Z."/>
            <person name="Lindblad-Toh K."/>
            <person name="Eichler E.E."/>
            <person name="Ponting C.P."/>
        </authorList>
    </citation>
    <scope>NUCLEOTIDE SEQUENCE [LARGE SCALE GENOMIC DNA]</scope>
    <source>
        <strain>C57BL/6J</strain>
    </source>
</reference>
<reference key="3">
    <citation type="journal article" date="2004" name="Genome Res.">
        <title>The status, quality, and expansion of the NIH full-length cDNA project: the Mammalian Gene Collection (MGC).</title>
        <authorList>
            <consortium name="The MGC Project Team"/>
        </authorList>
    </citation>
    <scope>NUCLEOTIDE SEQUENCE [LARGE SCALE MRNA]</scope>
    <source>
        <tissue>Liver</tissue>
    </source>
</reference>
<reference key="4">
    <citation type="journal article" date="1998" name="Arch. Biochem. Biophys.">
        <title>Cloning and expression of murine CYP2Cs and their ability to metabolize arachidonic acid.</title>
        <authorList>
            <person name="Luo G."/>
            <person name="Zeldin D.C."/>
            <person name="Blaisdell J.A."/>
            <person name="Hodgson E."/>
            <person name="Goldstein J.A."/>
        </authorList>
    </citation>
    <scope>FUNCTION</scope>
    <scope>CATALYTIC ACTIVITY</scope>
    <scope>TISSUE SPECIFICITY</scope>
    <scope>PATHWAY</scope>
</reference>
<reference key="5">
    <citation type="journal article" date="2010" name="Cell">
        <title>A tissue-specific atlas of mouse protein phosphorylation and expression.</title>
        <authorList>
            <person name="Huttlin E.L."/>
            <person name="Jedrychowski M.P."/>
            <person name="Elias J.E."/>
            <person name="Goswami T."/>
            <person name="Rad R."/>
            <person name="Beausoleil S.A."/>
            <person name="Villen J."/>
            <person name="Haas W."/>
            <person name="Sowa M.E."/>
            <person name="Gygi S.P."/>
        </authorList>
    </citation>
    <scope>IDENTIFICATION BY MASS SPECTROMETRY [LARGE SCALE ANALYSIS]</scope>
    <source>
        <tissue>Liver</tissue>
    </source>
</reference>
<reference key="6">
    <citation type="journal article" date="2013" name="Proc. Natl. Acad. Sci. U.S.A.">
        <title>Label-free quantitative proteomics of the lysine acetylome in mitochondria identifies substrates of SIRT3 in metabolic pathways.</title>
        <authorList>
            <person name="Rardin M.J."/>
            <person name="Newman J.C."/>
            <person name="Held J.M."/>
            <person name="Cusack M.P."/>
            <person name="Sorensen D.J."/>
            <person name="Li B."/>
            <person name="Schilling B."/>
            <person name="Mooney S.D."/>
            <person name="Kahn C.R."/>
            <person name="Verdin E."/>
            <person name="Gibson B.W."/>
        </authorList>
    </citation>
    <scope>ACETYLATION [LARGE SCALE ANALYSIS] AT LYS-249; LYS-252 AND LYS-375</scope>
    <scope>IDENTIFICATION BY MASS SPECTROMETRY [LARGE SCALE ANALYSIS]</scope>
    <source>
        <tissue>Liver</tissue>
    </source>
</reference>
<feature type="signal peptide" evidence="2">
    <location>
        <begin position="1"/>
        <end position="25"/>
    </location>
</feature>
<feature type="chain" id="PRO_0000051717" description="Cytochrome P450 2C29" evidence="2">
    <location>
        <begin position="26"/>
        <end position="490"/>
    </location>
</feature>
<feature type="binding site" description="axial binding residue" evidence="1">
    <location>
        <position position="435"/>
    </location>
    <ligand>
        <name>heme</name>
        <dbReference type="ChEBI" id="CHEBI:30413"/>
    </ligand>
    <ligandPart>
        <name>Fe</name>
        <dbReference type="ChEBI" id="CHEBI:18248"/>
    </ligandPart>
</feature>
<feature type="modified residue" description="N6-acetyllysine" evidence="8">
    <location>
        <position position="249"/>
    </location>
</feature>
<feature type="modified residue" description="N6-acetyllysine" evidence="8">
    <location>
        <position position="252"/>
    </location>
</feature>
<feature type="modified residue" description="N6-acetyllysine" evidence="8">
    <location>
        <position position="375"/>
    </location>
</feature>
<feature type="sequence conflict" description="In Ref. 3; AAH19908." evidence="5" ref="3">
    <original>I</original>
    <variation>M</variation>
    <location>
        <position position="106"/>
    </location>
</feature>
<feature type="sequence conflict" description="In Ref. 1; BAA04555." evidence="5" ref="1">
    <original>G</original>
    <variation>A</variation>
    <location>
        <position position="415"/>
    </location>
</feature>
<comment type="function">
    <text evidence="3">A cytochrome P450 monooxygenase that selectively catalyzes the epoxidation of 14,15 double bond of (5Z,8Z,11Z,14Z)-eicosatetraenoic acid (arachidonate) forming 14,15-epoxyeicosatrienoic acid (14,15-EET) regioisomer. Mechanistically, uses molecular oxygen inserting one oxygen atom into a substrate, and reducing the second into a water molecule, with two electrons provided by NADPH via cytochrome P450 reductase (CPR; NADPH--hemoprotein reductase).</text>
</comment>
<comment type="catalytic activity">
    <reaction evidence="3">
        <text>an organic molecule + reduced [NADPH--hemoprotein reductase] + O2 = an alcohol + oxidized [NADPH--hemoprotein reductase] + H2O + H(+)</text>
        <dbReference type="Rhea" id="RHEA:17149"/>
        <dbReference type="Rhea" id="RHEA-COMP:11964"/>
        <dbReference type="Rhea" id="RHEA-COMP:11965"/>
        <dbReference type="ChEBI" id="CHEBI:15377"/>
        <dbReference type="ChEBI" id="CHEBI:15378"/>
        <dbReference type="ChEBI" id="CHEBI:15379"/>
        <dbReference type="ChEBI" id="CHEBI:30879"/>
        <dbReference type="ChEBI" id="CHEBI:57618"/>
        <dbReference type="ChEBI" id="CHEBI:58210"/>
        <dbReference type="ChEBI" id="CHEBI:142491"/>
        <dbReference type="EC" id="1.14.14.1"/>
    </reaction>
    <physiologicalReaction direction="left-to-right" evidence="6">
        <dbReference type="Rhea" id="RHEA:17150"/>
    </physiologicalReaction>
</comment>
<comment type="catalytic activity">
    <reaction evidence="3">
        <text>(5Z,8Z,11Z,14Z)-eicosatetraenoate + reduced [NADPH--hemoprotein reductase] + O2 = 14,15-epoxy-(5Z,8Z,11Z)-eicosatrienoate + oxidized [NADPH--hemoprotein reductase] + H2O + H(+)</text>
        <dbReference type="Rhea" id="RHEA:51472"/>
        <dbReference type="Rhea" id="RHEA-COMP:11964"/>
        <dbReference type="Rhea" id="RHEA-COMP:11965"/>
        <dbReference type="ChEBI" id="CHEBI:15377"/>
        <dbReference type="ChEBI" id="CHEBI:15378"/>
        <dbReference type="ChEBI" id="CHEBI:15379"/>
        <dbReference type="ChEBI" id="CHEBI:32395"/>
        <dbReference type="ChEBI" id="CHEBI:57618"/>
        <dbReference type="ChEBI" id="CHEBI:58210"/>
        <dbReference type="ChEBI" id="CHEBI:84024"/>
    </reaction>
    <physiologicalReaction direction="left-to-right" evidence="6">
        <dbReference type="Rhea" id="RHEA:51473"/>
    </physiologicalReaction>
</comment>
<comment type="cofactor">
    <cofactor evidence="1">
        <name>heme</name>
        <dbReference type="ChEBI" id="CHEBI:30413"/>
    </cofactor>
</comment>
<comment type="pathway">
    <text evidence="6">Lipid metabolism; arachidonate metabolism.</text>
</comment>
<comment type="subcellular location">
    <subcellularLocation>
        <location>Endoplasmic reticulum membrane</location>
        <topology>Peripheral membrane protein</topology>
    </subcellularLocation>
    <subcellularLocation>
        <location>Microsome membrane</location>
        <topology>Peripheral membrane protein</topology>
    </subcellularLocation>
</comment>
<comment type="tissue specificity">
    <text evidence="3">Expressed in liver as well as in extrahepatic tissues including brain, kidney, lung, heart, and intestine.</text>
</comment>
<comment type="similarity">
    <text evidence="5">Belongs to the cytochrome P450 family.</text>
</comment>
<organism>
    <name type="scientific">Mus musculus</name>
    <name type="common">Mouse</name>
    <dbReference type="NCBI Taxonomy" id="10090"/>
    <lineage>
        <taxon>Eukaryota</taxon>
        <taxon>Metazoa</taxon>
        <taxon>Chordata</taxon>
        <taxon>Craniata</taxon>
        <taxon>Vertebrata</taxon>
        <taxon>Euteleostomi</taxon>
        <taxon>Mammalia</taxon>
        <taxon>Eutheria</taxon>
        <taxon>Euarchontoglires</taxon>
        <taxon>Glires</taxon>
        <taxon>Rodentia</taxon>
        <taxon>Myomorpha</taxon>
        <taxon>Muroidea</taxon>
        <taxon>Muridae</taxon>
        <taxon>Murinae</taxon>
        <taxon>Mus</taxon>
        <taxon>Mus</taxon>
    </lineage>
</organism>
<accession>Q64458</accession>
<accession>E9QMD8</accession>
<accession>Q8WUN8</accession>
<sequence length="490" mass="55716">MDLVVFLALTLSCLILLSLWRQSSGRGKLPPGPTPLPIIGNFLQIDVKNISQSFTNFSKAYGPVFTLYLGSKPTVILHGYEAVKEALIDRGEEFAGRGSFPMAEKIIKGFGVVFSNGNRWKEMRRFTLMTLRNLGMGKRNIEDRVQEEAQCLVEELRKTKGSPCDPTFILSCAPCNVICSIIFQNRFDYKDKEFLILMDKINENVKILSSPWLQVCNSFPSLIDYCPGSHHKIVKNFNYLKSYLLEKIKEHKESLDVTNPRDFIDYYLIKQKQVNHIEQSEFSLENLASTINDLFGAGTETTSTTLRYALLLLLKYPDVTAKVQEEIDRVVGRHRSPCMQDRSHMPYTDAMIHEVQRFIDLLPTSLPHAVTCDIKFRKYLIPKGTTVITSLSSVLHDSKEFPNPEMFDPGHFLNGNGNFKKSDYFMPFSTGKRICAGEGLARMELFLILTTILQNFKLKSLVHPKEIDITPVMNGFASLPPPYQLCFIPL</sequence>
<name>CP2CT_MOUSE</name>
<evidence type="ECO:0000250" key="1"/>
<evidence type="ECO:0000255" key="2"/>
<evidence type="ECO:0000269" key="3">
    <source>
    </source>
</evidence>
<evidence type="ECO:0000303" key="4">
    <source>
    </source>
</evidence>
<evidence type="ECO:0000305" key="5"/>
<evidence type="ECO:0000305" key="6">
    <source>
    </source>
</evidence>
<evidence type="ECO:0000312" key="7">
    <source>
        <dbReference type="MGI" id="MGI:103238"/>
    </source>
</evidence>
<evidence type="ECO:0007744" key="8">
    <source>
    </source>
</evidence>
<protein>
    <recommendedName>
        <fullName>Cytochrome P450 2C29</fullName>
        <ecNumber evidence="3">1.14.14.1</ecNumber>
    </recommendedName>
    <alternativeName>
        <fullName>Aldehyde oxygenase</fullName>
    </alternativeName>
    <alternativeName>
        <fullName>CYPIIC29</fullName>
    </alternativeName>
    <alternativeName>
        <fullName>Cytochrome P-450 MUT-2</fullName>
    </alternativeName>
</protein>
<dbReference type="EC" id="1.14.14.1" evidence="3"/>
<dbReference type="EMBL" id="D17674">
    <property type="protein sequence ID" value="BAA04555.1"/>
    <property type="molecule type" value="mRNA"/>
</dbReference>
<dbReference type="EMBL" id="AC120840">
    <property type="status" value="NOT_ANNOTATED_CDS"/>
    <property type="molecule type" value="Genomic_DNA"/>
</dbReference>
<dbReference type="EMBL" id="AC139233">
    <property type="status" value="NOT_ANNOTATED_CDS"/>
    <property type="molecule type" value="Genomic_DNA"/>
</dbReference>
<dbReference type="EMBL" id="BC019908">
    <property type="protein sequence ID" value="AAH19908.1"/>
    <property type="molecule type" value="mRNA"/>
</dbReference>
<dbReference type="CCDS" id="CCDS29793.1"/>
<dbReference type="PIR" id="I49610">
    <property type="entry name" value="I49610"/>
</dbReference>
<dbReference type="RefSeq" id="NP_031841.3">
    <property type="nucleotide sequence ID" value="NM_007815.3"/>
</dbReference>
<dbReference type="SMR" id="Q64458"/>
<dbReference type="BioGRID" id="199015">
    <property type="interactions" value="27"/>
</dbReference>
<dbReference type="FunCoup" id="Q64458">
    <property type="interactions" value="812"/>
</dbReference>
<dbReference type="STRING" id="10090.ENSMUSP00000003137"/>
<dbReference type="SwissLipids" id="SLP:000001668"/>
<dbReference type="GlyGen" id="Q64458">
    <property type="glycosylation" value="2 sites, 1 O-linked glycan (1 site)"/>
</dbReference>
<dbReference type="iPTMnet" id="Q64458"/>
<dbReference type="PhosphoSitePlus" id="Q64458"/>
<dbReference type="SwissPalm" id="Q64458"/>
<dbReference type="jPOST" id="Q64458"/>
<dbReference type="PaxDb" id="10090-ENSMUSP00000003137"/>
<dbReference type="PeptideAtlas" id="Q64458"/>
<dbReference type="ProteomicsDB" id="283616"/>
<dbReference type="Ensembl" id="ENSMUST00000003137.15">
    <property type="protein sequence ID" value="ENSMUSP00000003137.9"/>
    <property type="gene ID" value="ENSMUSG00000003053.18"/>
</dbReference>
<dbReference type="GeneID" id="13095"/>
<dbReference type="KEGG" id="mmu:13095"/>
<dbReference type="UCSC" id="uc008hjz.1">
    <property type="organism name" value="mouse"/>
</dbReference>
<dbReference type="AGR" id="MGI:103238"/>
<dbReference type="CTD" id="13095"/>
<dbReference type="MGI" id="MGI:103238">
    <property type="gene designation" value="Cyp2c29"/>
</dbReference>
<dbReference type="VEuPathDB" id="HostDB:ENSMUSG00000003053"/>
<dbReference type="eggNOG" id="KOG0156">
    <property type="taxonomic scope" value="Eukaryota"/>
</dbReference>
<dbReference type="GeneTree" id="ENSGT00940000155736"/>
<dbReference type="HOGENOM" id="CLU_001570_22_0_1"/>
<dbReference type="InParanoid" id="Q64458"/>
<dbReference type="OMA" id="VPHMNLA"/>
<dbReference type="OrthoDB" id="1103324at2759"/>
<dbReference type="PhylomeDB" id="Q64458"/>
<dbReference type="TreeFam" id="TF352043"/>
<dbReference type="Reactome" id="R-MMU-211981">
    <property type="pathway name" value="Xenobiotics"/>
</dbReference>
<dbReference type="SABIO-RK" id="Q64458"/>
<dbReference type="UniPathway" id="UPA00383"/>
<dbReference type="BioGRID-ORCS" id="13095">
    <property type="hits" value="3 hits in 80 CRISPR screens"/>
</dbReference>
<dbReference type="ChiTaRS" id="Cyp2c29">
    <property type="organism name" value="mouse"/>
</dbReference>
<dbReference type="PRO" id="PR:Q64458"/>
<dbReference type="Proteomes" id="UP000000589">
    <property type="component" value="Chromosome 19"/>
</dbReference>
<dbReference type="RNAct" id="Q64458">
    <property type="molecule type" value="protein"/>
</dbReference>
<dbReference type="Bgee" id="ENSMUSG00000003053">
    <property type="expression patterns" value="Expressed in liver and 39 other cell types or tissues"/>
</dbReference>
<dbReference type="ExpressionAtlas" id="Q64458">
    <property type="expression patterns" value="baseline and differential"/>
</dbReference>
<dbReference type="GO" id="GO:0005789">
    <property type="term" value="C:endoplasmic reticulum membrane"/>
    <property type="evidence" value="ECO:0007669"/>
    <property type="project" value="UniProtKB-SubCell"/>
</dbReference>
<dbReference type="GO" id="GO:0008404">
    <property type="term" value="F:arachidonate 14,15-epoxygenase activity"/>
    <property type="evidence" value="ECO:0000314"/>
    <property type="project" value="UniProtKB"/>
</dbReference>
<dbReference type="GO" id="GO:0020037">
    <property type="term" value="F:heme binding"/>
    <property type="evidence" value="ECO:0007669"/>
    <property type="project" value="InterPro"/>
</dbReference>
<dbReference type="GO" id="GO:0005506">
    <property type="term" value="F:iron ion binding"/>
    <property type="evidence" value="ECO:0007669"/>
    <property type="project" value="InterPro"/>
</dbReference>
<dbReference type="GO" id="GO:0016712">
    <property type="term" value="F:oxidoreductase activity, acting on paired donors, with incorporation or reduction of molecular oxygen, reduced flavin or flavoprotein as one donor, and incorporation of one atom of oxygen"/>
    <property type="evidence" value="ECO:0007669"/>
    <property type="project" value="UniProtKB-EC"/>
</dbReference>
<dbReference type="GO" id="GO:0019369">
    <property type="term" value="P:arachidonate metabolic process"/>
    <property type="evidence" value="ECO:0000314"/>
    <property type="project" value="UniProtKB"/>
</dbReference>
<dbReference type="CDD" id="cd20665">
    <property type="entry name" value="CYP2C-like"/>
    <property type="match status" value="1"/>
</dbReference>
<dbReference type="FunFam" id="1.10.630.10:FF:000299">
    <property type="entry name" value="Cytochrome P450 2C9"/>
    <property type="match status" value="1"/>
</dbReference>
<dbReference type="Gene3D" id="1.10.630.10">
    <property type="entry name" value="Cytochrome P450"/>
    <property type="match status" value="1"/>
</dbReference>
<dbReference type="InterPro" id="IPR001128">
    <property type="entry name" value="Cyt_P450"/>
</dbReference>
<dbReference type="InterPro" id="IPR017972">
    <property type="entry name" value="Cyt_P450_CS"/>
</dbReference>
<dbReference type="InterPro" id="IPR002401">
    <property type="entry name" value="Cyt_P450_E_grp-I"/>
</dbReference>
<dbReference type="InterPro" id="IPR008068">
    <property type="entry name" value="Cyt_P450_E_grp-I_CYP2B-like"/>
</dbReference>
<dbReference type="InterPro" id="IPR036396">
    <property type="entry name" value="Cyt_P450_sf"/>
</dbReference>
<dbReference type="InterPro" id="IPR050182">
    <property type="entry name" value="Cytochrome_P450_fam2"/>
</dbReference>
<dbReference type="PANTHER" id="PTHR24300:SF384">
    <property type="entry name" value="CYTOCHROME P450 2C29-RELATED"/>
    <property type="match status" value="1"/>
</dbReference>
<dbReference type="PANTHER" id="PTHR24300">
    <property type="entry name" value="CYTOCHROME P450 508A4-RELATED"/>
    <property type="match status" value="1"/>
</dbReference>
<dbReference type="Pfam" id="PF00067">
    <property type="entry name" value="p450"/>
    <property type="match status" value="1"/>
</dbReference>
<dbReference type="PRINTS" id="PR00463">
    <property type="entry name" value="EP450I"/>
</dbReference>
<dbReference type="PRINTS" id="PR01685">
    <property type="entry name" value="EP450ICYP2B"/>
</dbReference>
<dbReference type="PRINTS" id="PR00385">
    <property type="entry name" value="P450"/>
</dbReference>
<dbReference type="SUPFAM" id="SSF48264">
    <property type="entry name" value="Cytochrome P450"/>
    <property type="match status" value="1"/>
</dbReference>
<dbReference type="PROSITE" id="PS00086">
    <property type="entry name" value="CYTOCHROME_P450"/>
    <property type="match status" value="1"/>
</dbReference>
<proteinExistence type="evidence at protein level"/>
<keyword id="KW-0007">Acetylation</keyword>
<keyword id="KW-0256">Endoplasmic reticulum</keyword>
<keyword id="KW-0349">Heme</keyword>
<keyword id="KW-0408">Iron</keyword>
<keyword id="KW-0443">Lipid metabolism</keyword>
<keyword id="KW-0472">Membrane</keyword>
<keyword id="KW-0479">Metal-binding</keyword>
<keyword id="KW-0492">Microsome</keyword>
<keyword id="KW-0503">Monooxygenase</keyword>
<keyword id="KW-0560">Oxidoreductase</keyword>
<keyword id="KW-1185">Reference proteome</keyword>
<keyword id="KW-0732">Signal</keyword>
<gene>
    <name evidence="4 7" type="primary">Cyp2c29</name>
</gene>